<protein>
    <recommendedName>
        <fullName evidence="1">DNA mismatch repair protein MutL</fullName>
    </recommendedName>
</protein>
<gene>
    <name evidence="1" type="primary">mutL</name>
    <name type="ordered locus">lmo1404</name>
</gene>
<proteinExistence type="inferred from homology"/>
<accession>Q8Y788</accession>
<keyword id="KW-0227">DNA damage</keyword>
<keyword id="KW-0234">DNA repair</keyword>
<keyword id="KW-1185">Reference proteome</keyword>
<evidence type="ECO:0000255" key="1">
    <source>
        <dbReference type="HAMAP-Rule" id="MF_00149"/>
    </source>
</evidence>
<reference key="1">
    <citation type="journal article" date="2001" name="Science">
        <title>Comparative genomics of Listeria species.</title>
        <authorList>
            <person name="Glaser P."/>
            <person name="Frangeul L."/>
            <person name="Buchrieser C."/>
            <person name="Rusniok C."/>
            <person name="Amend A."/>
            <person name="Baquero F."/>
            <person name="Berche P."/>
            <person name="Bloecker H."/>
            <person name="Brandt P."/>
            <person name="Chakraborty T."/>
            <person name="Charbit A."/>
            <person name="Chetouani F."/>
            <person name="Couve E."/>
            <person name="de Daruvar A."/>
            <person name="Dehoux P."/>
            <person name="Domann E."/>
            <person name="Dominguez-Bernal G."/>
            <person name="Duchaud E."/>
            <person name="Durant L."/>
            <person name="Dussurget O."/>
            <person name="Entian K.-D."/>
            <person name="Fsihi H."/>
            <person name="Garcia-del Portillo F."/>
            <person name="Garrido P."/>
            <person name="Gautier L."/>
            <person name="Goebel W."/>
            <person name="Gomez-Lopez N."/>
            <person name="Hain T."/>
            <person name="Hauf J."/>
            <person name="Jackson D."/>
            <person name="Jones L.-M."/>
            <person name="Kaerst U."/>
            <person name="Kreft J."/>
            <person name="Kuhn M."/>
            <person name="Kunst F."/>
            <person name="Kurapkat G."/>
            <person name="Madueno E."/>
            <person name="Maitournam A."/>
            <person name="Mata Vicente J."/>
            <person name="Ng E."/>
            <person name="Nedjari H."/>
            <person name="Nordsiek G."/>
            <person name="Novella S."/>
            <person name="de Pablos B."/>
            <person name="Perez-Diaz J.-C."/>
            <person name="Purcell R."/>
            <person name="Remmel B."/>
            <person name="Rose M."/>
            <person name="Schlueter T."/>
            <person name="Simoes N."/>
            <person name="Tierrez A."/>
            <person name="Vazquez-Boland J.-A."/>
            <person name="Voss H."/>
            <person name="Wehland J."/>
            <person name="Cossart P."/>
        </authorList>
    </citation>
    <scope>NUCLEOTIDE SEQUENCE [LARGE SCALE GENOMIC DNA]</scope>
    <source>
        <strain>ATCC BAA-679 / EGD-e</strain>
    </source>
</reference>
<sequence length="601" mass="67795">MAKHIVELTDALSNKIAAGEVVERPASVVKELVENAIDAGSTVIDILVEEAGLNKITIIDNGSGIEEEDVATAFLRHATSKIKNEADLFRVHTLGFRGEALPSIASVSHLAMETSTGETKGTSISLEGGKIIEQKSGHARKGTQIEVSQLFFNTPARLKYLKSLPTELGNITDILNRLALAHPDISFRFSHNGKPLLQTNGNGDLRQVIAAIYGISIAKKSIPVKAESLDFKISGYAVLPEVNRSNRNYISTIINGRFIKNFALVKAIQEGYHTLLPIGRFPIIVLQIEMDPIIVDVNVHPAKLEVRLSKEKELGQLISQMIKEAFHKLQLIPEGEISKKQKEVQKSEQIQMSFEENKPAKEIPTLFSKPTIPEYVPSDEDAPREDDFILETMPPYEPQAEQEEHSKERIPKMYPIGQMHATYIFAQNENGLYIIDQHAAQERIKYEFYREKIGEVSRELQELLVPIVLEFPADEYVRLEEQKAKLEEVGVFLENFGQNSFIIRAHPTWFPKDQEEEMLREIIDEALSAPSISIHKLREDTAIMMSCKKSIKANHYLTTQDMEALLDTLREASDPFTCPHGRPVIIQYSTYELEKMFKRVM</sequence>
<feature type="chain" id="PRO_0000177954" description="DNA mismatch repair protein MutL">
    <location>
        <begin position="1"/>
        <end position="601"/>
    </location>
</feature>
<name>MUTL_LISMO</name>
<dbReference type="EMBL" id="AL591979">
    <property type="protein sequence ID" value="CAC99482.1"/>
    <property type="molecule type" value="Genomic_DNA"/>
</dbReference>
<dbReference type="PIR" id="AD1250">
    <property type="entry name" value="AD1250"/>
</dbReference>
<dbReference type="RefSeq" id="NP_464929.1">
    <property type="nucleotide sequence ID" value="NC_003210.1"/>
</dbReference>
<dbReference type="RefSeq" id="WP_003732291.1">
    <property type="nucleotide sequence ID" value="NZ_CP149495.1"/>
</dbReference>
<dbReference type="SMR" id="Q8Y788"/>
<dbReference type="STRING" id="169963.gene:17594061"/>
<dbReference type="PaxDb" id="169963-lmo1404"/>
<dbReference type="DNASU" id="986410"/>
<dbReference type="EnsemblBacteria" id="CAC99482">
    <property type="protein sequence ID" value="CAC99482"/>
    <property type="gene ID" value="CAC99482"/>
</dbReference>
<dbReference type="GeneID" id="986410"/>
<dbReference type="KEGG" id="lmo:lmo1404"/>
<dbReference type="PATRIC" id="fig|169963.11.peg.1443"/>
<dbReference type="eggNOG" id="COG0323">
    <property type="taxonomic scope" value="Bacteria"/>
</dbReference>
<dbReference type="HOGENOM" id="CLU_004131_4_1_9"/>
<dbReference type="OrthoDB" id="9763467at2"/>
<dbReference type="PhylomeDB" id="Q8Y788"/>
<dbReference type="BioCyc" id="LMON169963:LMO1404-MONOMER"/>
<dbReference type="Proteomes" id="UP000000817">
    <property type="component" value="Chromosome"/>
</dbReference>
<dbReference type="GO" id="GO:0032300">
    <property type="term" value="C:mismatch repair complex"/>
    <property type="evidence" value="ECO:0000318"/>
    <property type="project" value="GO_Central"/>
</dbReference>
<dbReference type="GO" id="GO:0005524">
    <property type="term" value="F:ATP binding"/>
    <property type="evidence" value="ECO:0007669"/>
    <property type="project" value="InterPro"/>
</dbReference>
<dbReference type="GO" id="GO:0016887">
    <property type="term" value="F:ATP hydrolysis activity"/>
    <property type="evidence" value="ECO:0000318"/>
    <property type="project" value="GO_Central"/>
</dbReference>
<dbReference type="GO" id="GO:0140664">
    <property type="term" value="F:ATP-dependent DNA damage sensor activity"/>
    <property type="evidence" value="ECO:0007669"/>
    <property type="project" value="InterPro"/>
</dbReference>
<dbReference type="GO" id="GO:0030983">
    <property type="term" value="F:mismatched DNA binding"/>
    <property type="evidence" value="ECO:0007669"/>
    <property type="project" value="InterPro"/>
</dbReference>
<dbReference type="GO" id="GO:0006298">
    <property type="term" value="P:mismatch repair"/>
    <property type="evidence" value="ECO:0000318"/>
    <property type="project" value="GO_Central"/>
</dbReference>
<dbReference type="CDD" id="cd16926">
    <property type="entry name" value="HATPase_MutL-MLH-PMS-like"/>
    <property type="match status" value="1"/>
</dbReference>
<dbReference type="CDD" id="cd00782">
    <property type="entry name" value="MutL_Trans"/>
    <property type="match status" value="1"/>
</dbReference>
<dbReference type="FunFam" id="3.30.1370.100:FF:000004">
    <property type="entry name" value="DNA mismatch repair endonuclease MutL"/>
    <property type="match status" value="1"/>
</dbReference>
<dbReference type="FunFam" id="3.30.230.10:FF:000036">
    <property type="entry name" value="DNA mismatch repair endonuclease MutL"/>
    <property type="match status" value="1"/>
</dbReference>
<dbReference type="FunFam" id="3.30.565.10:FF:000003">
    <property type="entry name" value="DNA mismatch repair endonuclease MutL"/>
    <property type="match status" value="1"/>
</dbReference>
<dbReference type="Gene3D" id="3.30.230.10">
    <property type="match status" value="1"/>
</dbReference>
<dbReference type="Gene3D" id="3.30.565.10">
    <property type="entry name" value="Histidine kinase-like ATPase, C-terminal domain"/>
    <property type="match status" value="1"/>
</dbReference>
<dbReference type="Gene3D" id="3.30.1540.20">
    <property type="entry name" value="MutL, C-terminal domain, dimerisation subdomain"/>
    <property type="match status" value="1"/>
</dbReference>
<dbReference type="Gene3D" id="3.30.1370.100">
    <property type="entry name" value="MutL, C-terminal domain, regulatory subdomain"/>
    <property type="match status" value="1"/>
</dbReference>
<dbReference type="HAMAP" id="MF_00149">
    <property type="entry name" value="DNA_mis_repair"/>
    <property type="match status" value="1"/>
</dbReference>
<dbReference type="InterPro" id="IPR014762">
    <property type="entry name" value="DNA_mismatch_repair_CS"/>
</dbReference>
<dbReference type="InterPro" id="IPR020667">
    <property type="entry name" value="DNA_mismatch_repair_MutL"/>
</dbReference>
<dbReference type="InterPro" id="IPR013507">
    <property type="entry name" value="DNA_mismatch_S5_2-like"/>
</dbReference>
<dbReference type="InterPro" id="IPR036890">
    <property type="entry name" value="HATPase_C_sf"/>
</dbReference>
<dbReference type="InterPro" id="IPR002099">
    <property type="entry name" value="MutL/Mlh/PMS"/>
</dbReference>
<dbReference type="InterPro" id="IPR038973">
    <property type="entry name" value="MutL/Mlh/Pms-like"/>
</dbReference>
<dbReference type="InterPro" id="IPR014790">
    <property type="entry name" value="MutL_C"/>
</dbReference>
<dbReference type="InterPro" id="IPR042120">
    <property type="entry name" value="MutL_C_dimsub"/>
</dbReference>
<dbReference type="InterPro" id="IPR042121">
    <property type="entry name" value="MutL_C_regsub"/>
</dbReference>
<dbReference type="InterPro" id="IPR037198">
    <property type="entry name" value="MutL_C_sf"/>
</dbReference>
<dbReference type="InterPro" id="IPR020568">
    <property type="entry name" value="Ribosomal_Su5_D2-typ_SF"/>
</dbReference>
<dbReference type="InterPro" id="IPR014721">
    <property type="entry name" value="Ribsml_uS5_D2-typ_fold_subgr"/>
</dbReference>
<dbReference type="NCBIfam" id="TIGR00585">
    <property type="entry name" value="mutl"/>
    <property type="match status" value="1"/>
</dbReference>
<dbReference type="PANTHER" id="PTHR10073">
    <property type="entry name" value="DNA MISMATCH REPAIR PROTEIN MLH, PMS, MUTL"/>
    <property type="match status" value="1"/>
</dbReference>
<dbReference type="PANTHER" id="PTHR10073:SF12">
    <property type="entry name" value="DNA MISMATCH REPAIR PROTEIN MLH1"/>
    <property type="match status" value="1"/>
</dbReference>
<dbReference type="Pfam" id="PF01119">
    <property type="entry name" value="DNA_mis_repair"/>
    <property type="match status" value="1"/>
</dbReference>
<dbReference type="Pfam" id="PF13589">
    <property type="entry name" value="HATPase_c_3"/>
    <property type="match status" value="1"/>
</dbReference>
<dbReference type="Pfam" id="PF08676">
    <property type="entry name" value="MutL_C"/>
    <property type="match status" value="1"/>
</dbReference>
<dbReference type="SMART" id="SM01340">
    <property type="entry name" value="DNA_mis_repair"/>
    <property type="match status" value="1"/>
</dbReference>
<dbReference type="SMART" id="SM00853">
    <property type="entry name" value="MutL_C"/>
    <property type="match status" value="1"/>
</dbReference>
<dbReference type="SUPFAM" id="SSF55874">
    <property type="entry name" value="ATPase domain of HSP90 chaperone/DNA topoisomerase II/histidine kinase"/>
    <property type="match status" value="1"/>
</dbReference>
<dbReference type="SUPFAM" id="SSF118116">
    <property type="entry name" value="DNA mismatch repair protein MutL"/>
    <property type="match status" value="1"/>
</dbReference>
<dbReference type="SUPFAM" id="SSF54211">
    <property type="entry name" value="Ribosomal protein S5 domain 2-like"/>
    <property type="match status" value="1"/>
</dbReference>
<dbReference type="PROSITE" id="PS00058">
    <property type="entry name" value="DNA_MISMATCH_REPAIR_1"/>
    <property type="match status" value="1"/>
</dbReference>
<comment type="function">
    <text evidence="1">This protein is involved in the repair of mismatches in DNA. It is required for dam-dependent methyl-directed DNA mismatch repair. May act as a 'molecular matchmaker', a protein that promotes the formation of a stable complex between two or more DNA-binding proteins in an ATP-dependent manner without itself being part of a final effector complex.</text>
</comment>
<comment type="similarity">
    <text evidence="1">Belongs to the DNA mismatch repair MutL/HexB family.</text>
</comment>
<organism>
    <name type="scientific">Listeria monocytogenes serovar 1/2a (strain ATCC BAA-679 / EGD-e)</name>
    <dbReference type="NCBI Taxonomy" id="169963"/>
    <lineage>
        <taxon>Bacteria</taxon>
        <taxon>Bacillati</taxon>
        <taxon>Bacillota</taxon>
        <taxon>Bacilli</taxon>
        <taxon>Bacillales</taxon>
        <taxon>Listeriaceae</taxon>
        <taxon>Listeria</taxon>
    </lineage>
</organism>